<keyword id="KW-0131">Cell cycle</keyword>
<keyword id="KW-0132">Cell division</keyword>
<keyword id="KW-0574">Periplasm</keyword>
<keyword id="KW-1185">Reference proteome</keyword>
<keyword id="KW-0732">Signal</keyword>
<proteinExistence type="inferred from homology"/>
<organism>
    <name type="scientific">Shigella dysenteriae serotype 1 (strain Sd197)</name>
    <dbReference type="NCBI Taxonomy" id="300267"/>
    <lineage>
        <taxon>Bacteria</taxon>
        <taxon>Pseudomonadati</taxon>
        <taxon>Pseudomonadota</taxon>
        <taxon>Gammaproteobacteria</taxon>
        <taxon>Enterobacterales</taxon>
        <taxon>Enterobacteriaceae</taxon>
        <taxon>Shigella</taxon>
    </lineage>
</organism>
<name>TOLB_SHIDS</name>
<feature type="signal peptide" evidence="1">
    <location>
        <begin position="1"/>
        <end position="21"/>
    </location>
</feature>
<feature type="chain" id="PRO_0000259089" description="Tol-Pal system protein TolB" evidence="1">
    <location>
        <begin position="22"/>
        <end position="430"/>
    </location>
</feature>
<gene>
    <name evidence="1" type="primary">tolB</name>
    <name type="ordered locus">SDY_0688</name>
</gene>
<evidence type="ECO:0000255" key="1">
    <source>
        <dbReference type="HAMAP-Rule" id="MF_00671"/>
    </source>
</evidence>
<accession>Q32II1</accession>
<sequence length="430" mass="45986">MKQALRVAFGFLILWASVLHAEVRIVIDSGVDSGRPIGVVPFQWAGPGAAPEDIGGIVAADLRNSGKFNPLDRARLPQQPGSAQEVQPAAWSALGIDAVVVGQVTPNPDGSYNVAYQLVDTGGAPGTVLAQNSYKVNKQWLRYASHTASDEVFEKLTGIKGAFRTRIAYVVQTNGGQFPYELRVSDYDGYNQFVVHRSPQPLMSPAWSPDGSKLAYVTFESGRSALVIQTLANGAVRQVASFPRHNGAPAFSPDGSKLAFALSKTGSLNLYVMDLASGQIRQVTDGRSNNTEPTWFPDSQNLAFTSDQAGRPQVYKVNINGGAPQRITWEGSQNQDADVSSDGKFMVMVSSNGGQQHIAKQDLATGGVQVLSSTFLDETPSLAPNGTMVIYSSSQGMGSVLNLVSTDGRFKARLPATDGQVKFPAWSPYL</sequence>
<dbReference type="EMBL" id="CP000034">
    <property type="protein sequence ID" value="ABB60876.1"/>
    <property type="molecule type" value="Genomic_DNA"/>
</dbReference>
<dbReference type="RefSeq" id="WP_011378599.1">
    <property type="nucleotide sequence ID" value="NC_007606.1"/>
</dbReference>
<dbReference type="RefSeq" id="YP_402365.1">
    <property type="nucleotide sequence ID" value="NC_007606.1"/>
</dbReference>
<dbReference type="SMR" id="Q32II1"/>
<dbReference type="STRING" id="300267.SDY_0688"/>
<dbReference type="EnsemblBacteria" id="ABB60876">
    <property type="protein sequence ID" value="ABB60876"/>
    <property type="gene ID" value="SDY_0688"/>
</dbReference>
<dbReference type="KEGG" id="sdy:SDY_0688"/>
<dbReference type="PATRIC" id="fig|300267.13.peg.802"/>
<dbReference type="HOGENOM" id="CLU_047123_0_0_6"/>
<dbReference type="Proteomes" id="UP000002716">
    <property type="component" value="Chromosome"/>
</dbReference>
<dbReference type="GO" id="GO:0042597">
    <property type="term" value="C:periplasmic space"/>
    <property type="evidence" value="ECO:0007669"/>
    <property type="project" value="UniProtKB-SubCell"/>
</dbReference>
<dbReference type="GO" id="GO:0051301">
    <property type="term" value="P:cell division"/>
    <property type="evidence" value="ECO:0007669"/>
    <property type="project" value="UniProtKB-UniRule"/>
</dbReference>
<dbReference type="GO" id="GO:0017038">
    <property type="term" value="P:protein import"/>
    <property type="evidence" value="ECO:0007669"/>
    <property type="project" value="InterPro"/>
</dbReference>
<dbReference type="FunFam" id="2.120.10.30:FF:000022">
    <property type="entry name" value="Tol-Pal system protein TolB"/>
    <property type="match status" value="1"/>
</dbReference>
<dbReference type="FunFam" id="3.40.50.10070:FF:000001">
    <property type="entry name" value="Tol-Pal system protein TolB"/>
    <property type="match status" value="1"/>
</dbReference>
<dbReference type="Gene3D" id="2.120.10.30">
    <property type="entry name" value="TolB, C-terminal domain"/>
    <property type="match status" value="1"/>
</dbReference>
<dbReference type="Gene3D" id="3.40.50.10070">
    <property type="entry name" value="TolB, N-terminal domain"/>
    <property type="match status" value="1"/>
</dbReference>
<dbReference type="HAMAP" id="MF_00671">
    <property type="entry name" value="TolB"/>
    <property type="match status" value="1"/>
</dbReference>
<dbReference type="InterPro" id="IPR011042">
    <property type="entry name" value="6-blade_b-propeller_TolB-like"/>
</dbReference>
<dbReference type="InterPro" id="IPR011659">
    <property type="entry name" value="PD40"/>
</dbReference>
<dbReference type="InterPro" id="IPR014167">
    <property type="entry name" value="Tol-Pal_TolB"/>
</dbReference>
<dbReference type="InterPro" id="IPR007195">
    <property type="entry name" value="TolB_N"/>
</dbReference>
<dbReference type="NCBIfam" id="TIGR02800">
    <property type="entry name" value="propeller_TolB"/>
    <property type="match status" value="1"/>
</dbReference>
<dbReference type="PANTHER" id="PTHR36842:SF1">
    <property type="entry name" value="PROTEIN TOLB"/>
    <property type="match status" value="1"/>
</dbReference>
<dbReference type="PANTHER" id="PTHR36842">
    <property type="entry name" value="PROTEIN TOLB HOMOLOG"/>
    <property type="match status" value="1"/>
</dbReference>
<dbReference type="Pfam" id="PF07676">
    <property type="entry name" value="PD40"/>
    <property type="match status" value="4"/>
</dbReference>
<dbReference type="Pfam" id="PF04052">
    <property type="entry name" value="TolB_N"/>
    <property type="match status" value="1"/>
</dbReference>
<dbReference type="SUPFAM" id="SSF52964">
    <property type="entry name" value="TolB, N-terminal domain"/>
    <property type="match status" value="1"/>
</dbReference>
<dbReference type="SUPFAM" id="SSF69304">
    <property type="entry name" value="Tricorn protease N-terminal domain"/>
    <property type="match status" value="1"/>
</dbReference>
<reference key="1">
    <citation type="journal article" date="2005" name="Nucleic Acids Res.">
        <title>Genome dynamics and diversity of Shigella species, the etiologic agents of bacillary dysentery.</title>
        <authorList>
            <person name="Yang F."/>
            <person name="Yang J."/>
            <person name="Zhang X."/>
            <person name="Chen L."/>
            <person name="Jiang Y."/>
            <person name="Yan Y."/>
            <person name="Tang X."/>
            <person name="Wang J."/>
            <person name="Xiong Z."/>
            <person name="Dong J."/>
            <person name="Xue Y."/>
            <person name="Zhu Y."/>
            <person name="Xu X."/>
            <person name="Sun L."/>
            <person name="Chen S."/>
            <person name="Nie H."/>
            <person name="Peng J."/>
            <person name="Xu J."/>
            <person name="Wang Y."/>
            <person name="Yuan Z."/>
            <person name="Wen Y."/>
            <person name="Yao Z."/>
            <person name="Shen Y."/>
            <person name="Qiang B."/>
            <person name="Hou Y."/>
            <person name="Yu J."/>
            <person name="Jin Q."/>
        </authorList>
    </citation>
    <scope>NUCLEOTIDE SEQUENCE [LARGE SCALE GENOMIC DNA]</scope>
    <source>
        <strain>Sd197</strain>
    </source>
</reference>
<protein>
    <recommendedName>
        <fullName evidence="1">Tol-Pal system protein TolB</fullName>
    </recommendedName>
</protein>
<comment type="function">
    <text evidence="1">Part of the Tol-Pal system, which plays a role in outer membrane invagination during cell division and is important for maintaining outer membrane integrity. TolB occupies a key intermediary position in the Tol-Pal system because it communicates directly with both membrane-embedded components, Pal in the outer membrane and TolA in the inner membrane.</text>
</comment>
<comment type="subunit">
    <text evidence="1">The Tol-Pal system is composed of five core proteins: the inner membrane proteins TolA, TolQ and TolR, the periplasmic protein TolB and the outer membrane protein Pal. They form a network linking the inner and outer membranes and the peptidoglycan layer.</text>
</comment>
<comment type="subcellular location">
    <subcellularLocation>
        <location evidence="1">Periplasm</location>
    </subcellularLocation>
</comment>
<comment type="similarity">
    <text evidence="1">Belongs to the TolB family.</text>
</comment>